<organism>
    <name type="scientific">Saccharomyces cerevisiae (strain ATCC 204508 / S288c)</name>
    <name type="common">Baker's yeast</name>
    <dbReference type="NCBI Taxonomy" id="559292"/>
    <lineage>
        <taxon>Eukaryota</taxon>
        <taxon>Fungi</taxon>
        <taxon>Dikarya</taxon>
        <taxon>Ascomycota</taxon>
        <taxon>Saccharomycotina</taxon>
        <taxon>Saccharomycetes</taxon>
        <taxon>Saccharomycetales</taxon>
        <taxon>Saccharomycetaceae</taxon>
        <taxon>Saccharomyces</taxon>
    </lineage>
</organism>
<evidence type="ECO:0000250" key="1"/>
<evidence type="ECO:0000305" key="2"/>
<evidence type="ECO:0000305" key="3">
    <source>
    </source>
</evidence>
<evidence type="ECO:0000305" key="4">
    <source>
    </source>
</evidence>
<evidence type="ECO:0000312" key="5">
    <source>
        <dbReference type="SGD" id="S000001837"/>
    </source>
</evidence>
<dbReference type="EC" id="1.1.1.-"/>
<dbReference type="EMBL" id="D50617">
    <property type="protein sequence ID" value="BAA09184.1"/>
    <property type="molecule type" value="Genomic_DNA"/>
</dbReference>
<dbReference type="EMBL" id="AY557801">
    <property type="protein sequence ID" value="AAS56127.1"/>
    <property type="molecule type" value="Genomic_DNA"/>
</dbReference>
<dbReference type="PIR" id="S56198">
    <property type="entry name" value="S56198"/>
</dbReference>
<dbReference type="SMR" id="P43546"/>
<dbReference type="BioGRID" id="31090">
    <property type="interactions" value="20"/>
</dbReference>
<dbReference type="PaxDb" id="4932-YFL057C"/>
<dbReference type="SGD" id="S000001837">
    <property type="gene designation" value="YFL057C"/>
</dbReference>
<dbReference type="eggNOG" id="KOG1575">
    <property type="taxonomic scope" value="Eukaryota"/>
</dbReference>
<dbReference type="HOGENOM" id="CLU_138066_1_0_1"/>
<dbReference type="GO" id="GO:0016491">
    <property type="term" value="F:oxidoreductase activity"/>
    <property type="evidence" value="ECO:0007669"/>
    <property type="project" value="UniProtKB-KW"/>
</dbReference>
<dbReference type="FunFam" id="3.20.20.100:FF:000065">
    <property type="entry name" value="Aryl-alcohol dehydrogenase"/>
    <property type="match status" value="1"/>
</dbReference>
<dbReference type="Gene3D" id="3.20.20.100">
    <property type="entry name" value="NADP-dependent oxidoreductase domain"/>
    <property type="match status" value="1"/>
</dbReference>
<dbReference type="InterPro" id="IPR050523">
    <property type="entry name" value="AKR_Detox_Biosynth"/>
</dbReference>
<dbReference type="InterPro" id="IPR023210">
    <property type="entry name" value="NADP_OxRdtase_dom"/>
</dbReference>
<dbReference type="InterPro" id="IPR036812">
    <property type="entry name" value="NADP_OxRdtase_dom_sf"/>
</dbReference>
<dbReference type="PANTHER" id="PTHR43364:SF2">
    <property type="entry name" value="ARYL-ALCOHOL DEHYDROGENASE AAD10-RELATED"/>
    <property type="match status" value="1"/>
</dbReference>
<dbReference type="PANTHER" id="PTHR43364">
    <property type="entry name" value="NADH-SPECIFIC METHYLGLYOXAL REDUCTASE-RELATED"/>
    <property type="match status" value="1"/>
</dbReference>
<dbReference type="Pfam" id="PF00248">
    <property type="entry name" value="Aldo_ket_red"/>
    <property type="match status" value="1"/>
</dbReference>
<dbReference type="SUPFAM" id="SSF51430">
    <property type="entry name" value="NAD(P)-linked oxidoreductase"/>
    <property type="match status" value="1"/>
</dbReference>
<reference key="1">
    <citation type="journal article" date="1995" name="Nat. Genet.">
        <title>Analysis of the nucleotide sequence of chromosome VI from Saccharomyces cerevisiae.</title>
        <authorList>
            <person name="Murakami Y."/>
            <person name="Naitou M."/>
            <person name="Hagiwara H."/>
            <person name="Shibata T."/>
            <person name="Ozawa M."/>
            <person name="Sasanuma S."/>
            <person name="Sasanuma M."/>
            <person name="Tsuchiya Y."/>
            <person name="Soeda E."/>
            <person name="Yokoyama K."/>
            <person name="Yamazaki M."/>
            <person name="Tashiro H."/>
            <person name="Eki T."/>
        </authorList>
    </citation>
    <scope>NUCLEOTIDE SEQUENCE [LARGE SCALE GENOMIC DNA]</scope>
    <source>
        <strain>ATCC 204508 / S288c</strain>
    </source>
</reference>
<reference key="2">
    <citation type="journal article" date="2014" name="G3 (Bethesda)">
        <title>The reference genome sequence of Saccharomyces cerevisiae: Then and now.</title>
        <authorList>
            <person name="Engel S.R."/>
            <person name="Dietrich F.S."/>
            <person name="Fisk D.G."/>
            <person name="Binkley G."/>
            <person name="Balakrishnan R."/>
            <person name="Costanzo M.C."/>
            <person name="Dwight S.S."/>
            <person name="Hitz B.C."/>
            <person name="Karra K."/>
            <person name="Nash R.S."/>
            <person name="Weng S."/>
            <person name="Wong E.D."/>
            <person name="Lloyd P."/>
            <person name="Skrzypek M.S."/>
            <person name="Miyasato S.R."/>
            <person name="Simison M."/>
            <person name="Cherry J.M."/>
        </authorList>
    </citation>
    <scope>GENOME REANNOTATION</scope>
    <source>
        <strain>ATCC 204508 / S288c</strain>
    </source>
</reference>
<reference key="3">
    <citation type="journal article" date="2007" name="Genome Res.">
        <title>Approaching a complete repository of sequence-verified protein-encoding clones for Saccharomyces cerevisiae.</title>
        <authorList>
            <person name="Hu Y."/>
            <person name="Rolfs A."/>
            <person name="Bhullar B."/>
            <person name="Murthy T.V.S."/>
            <person name="Zhu C."/>
            <person name="Berger M.F."/>
            <person name="Camargo A.A."/>
            <person name="Kelley F."/>
            <person name="McCarron S."/>
            <person name="Jepson D."/>
            <person name="Richardson A."/>
            <person name="Raphael J."/>
            <person name="Moreira D."/>
            <person name="Taycher E."/>
            <person name="Zuo D."/>
            <person name="Mohr S."/>
            <person name="Kane M.F."/>
            <person name="Williamson J."/>
            <person name="Simpson A.J.G."/>
            <person name="Bulyk M.L."/>
            <person name="Harlow E."/>
            <person name="Marsischky G."/>
            <person name="Kolodner R.D."/>
            <person name="LaBaer J."/>
        </authorList>
    </citation>
    <scope>NUCLEOTIDE SEQUENCE [GENOMIC DNA]</scope>
    <source>
        <strain>ATCC 204508 / S288c</strain>
    </source>
</reference>
<reference key="4">
    <citation type="journal article" date="1999" name="Genetics">
        <title>Analysis of the seven-member AAD gene set demonstrates that genetic redundancy in yeast may be more apparent than real.</title>
        <authorList>
            <person name="Delneri D."/>
            <person name="Gardner D.C.J."/>
            <person name="Oliver S.G."/>
        </authorList>
    </citation>
    <scope>IDENTIFICATION OF FRAMESHIFT</scope>
</reference>
<accession>P43546</accession>
<accession>D6VTH3</accession>
<proteinExistence type="uncertain"/>
<gene>
    <name evidence="5" type="ordered locus">YFL057C</name>
</gene>
<comment type="function">
    <text evidence="1">Putative aryl-alcohol dehydrogenase.</text>
</comment>
<comment type="similarity">
    <text evidence="2">Belongs to the aldo/keto reductase family. Aldo/keto reductase 2 subfamily.</text>
</comment>
<comment type="caution">
    <text evidence="3 4">Could be the product of a pseudogene unlikely to encode a functional protein. This is the C-terminal part of an aryl-alcohol dehydrogenase homolog of the AAD family. In strain S288c, a -1 frameshift disrupts the gene coding for this protein and produces two ORFs YFL056C and YFL057C. Because of that it is not part of the S.cerevisiae S288c complete/reference proteome set.</text>
</comment>
<name>YFL57_YEAST</name>
<feature type="chain" id="PRO_0000070371" description="Putative aryl-alcohol dehydrogenase YFL057C">
    <location>
        <begin position="1"/>
        <end position="152"/>
    </location>
</feature>
<sequence>MARHFGMALAPWDVMGGGRFQSKKAMEERRKNGEGIRSFVGASEQTDAEIKISEALAKVAEEHGTESVTAIAIAYVRSKAKNVFPLVGGRKIEHLKQNIEALSIKLTPEQIKYLESIIPFDVGFPTNFIGDDPAVTKKASLLTAMSAQISFD</sequence>
<protein>
    <recommendedName>
        <fullName evidence="2">Putative aryl-alcohol dehydrogenase YFL057C</fullName>
        <ecNumber>1.1.1.-</ecNumber>
    </recommendedName>
</protein>
<keyword id="KW-0560">Oxidoreductase</keyword>